<dbReference type="EC" id="2.4.1.18" evidence="1"/>
<dbReference type="EMBL" id="CP000240">
    <property type="protein sequence ID" value="ABD02927.1"/>
    <property type="molecule type" value="Genomic_DNA"/>
</dbReference>
<dbReference type="RefSeq" id="WP_011433566.1">
    <property type="nucleotide sequence ID" value="NC_007776.1"/>
</dbReference>
<dbReference type="SMR" id="Q2JK68"/>
<dbReference type="STRING" id="321332.CYB_1978"/>
<dbReference type="CAZy" id="CBM48">
    <property type="family name" value="Carbohydrate-Binding Module Family 48"/>
</dbReference>
<dbReference type="CAZy" id="GH13">
    <property type="family name" value="Glycoside Hydrolase Family 13"/>
</dbReference>
<dbReference type="KEGG" id="cyb:CYB_1978"/>
<dbReference type="eggNOG" id="COG0296">
    <property type="taxonomic scope" value="Bacteria"/>
</dbReference>
<dbReference type="HOGENOM" id="CLU_004245_3_2_3"/>
<dbReference type="OrthoDB" id="9800174at2"/>
<dbReference type="UniPathway" id="UPA00164"/>
<dbReference type="Proteomes" id="UP000001938">
    <property type="component" value="Chromosome"/>
</dbReference>
<dbReference type="GO" id="GO:0005829">
    <property type="term" value="C:cytosol"/>
    <property type="evidence" value="ECO:0007669"/>
    <property type="project" value="TreeGrafter"/>
</dbReference>
<dbReference type="GO" id="GO:0003844">
    <property type="term" value="F:1,4-alpha-glucan branching enzyme activity"/>
    <property type="evidence" value="ECO:0007669"/>
    <property type="project" value="UniProtKB-UniRule"/>
</dbReference>
<dbReference type="GO" id="GO:0043169">
    <property type="term" value="F:cation binding"/>
    <property type="evidence" value="ECO:0007669"/>
    <property type="project" value="InterPro"/>
</dbReference>
<dbReference type="GO" id="GO:0004553">
    <property type="term" value="F:hydrolase activity, hydrolyzing O-glycosyl compounds"/>
    <property type="evidence" value="ECO:0007669"/>
    <property type="project" value="InterPro"/>
</dbReference>
<dbReference type="GO" id="GO:0005978">
    <property type="term" value="P:glycogen biosynthetic process"/>
    <property type="evidence" value="ECO:0007669"/>
    <property type="project" value="UniProtKB-UniRule"/>
</dbReference>
<dbReference type="CDD" id="cd11322">
    <property type="entry name" value="AmyAc_Glg_BE"/>
    <property type="match status" value="1"/>
</dbReference>
<dbReference type="CDD" id="cd02855">
    <property type="entry name" value="E_set_GBE_prok_N"/>
    <property type="match status" value="1"/>
</dbReference>
<dbReference type="FunFam" id="2.60.40.10:FF:000169">
    <property type="entry name" value="1,4-alpha-glucan branching enzyme GlgB"/>
    <property type="match status" value="1"/>
</dbReference>
<dbReference type="FunFam" id="2.60.40.1180:FF:000002">
    <property type="entry name" value="1,4-alpha-glucan branching enzyme GlgB"/>
    <property type="match status" value="1"/>
</dbReference>
<dbReference type="FunFam" id="3.20.20.80:FF:000003">
    <property type="entry name" value="1,4-alpha-glucan branching enzyme GlgB"/>
    <property type="match status" value="1"/>
</dbReference>
<dbReference type="Gene3D" id="3.20.20.80">
    <property type="entry name" value="Glycosidases"/>
    <property type="match status" value="1"/>
</dbReference>
<dbReference type="Gene3D" id="2.60.40.1180">
    <property type="entry name" value="Golgi alpha-mannosidase II"/>
    <property type="match status" value="1"/>
</dbReference>
<dbReference type="Gene3D" id="2.60.40.10">
    <property type="entry name" value="Immunoglobulins"/>
    <property type="match status" value="1"/>
</dbReference>
<dbReference type="HAMAP" id="MF_00685">
    <property type="entry name" value="GlgB"/>
    <property type="match status" value="1"/>
</dbReference>
<dbReference type="InterPro" id="IPR006048">
    <property type="entry name" value="A-amylase/branching_C"/>
</dbReference>
<dbReference type="InterPro" id="IPR037439">
    <property type="entry name" value="Branching_enzy"/>
</dbReference>
<dbReference type="InterPro" id="IPR006407">
    <property type="entry name" value="GlgB"/>
</dbReference>
<dbReference type="InterPro" id="IPR054169">
    <property type="entry name" value="GlgB_N"/>
</dbReference>
<dbReference type="InterPro" id="IPR044143">
    <property type="entry name" value="GlgB_N_E_set_prok"/>
</dbReference>
<dbReference type="InterPro" id="IPR006047">
    <property type="entry name" value="Glyco_hydro_13_cat_dom"/>
</dbReference>
<dbReference type="InterPro" id="IPR004193">
    <property type="entry name" value="Glyco_hydro_13_N"/>
</dbReference>
<dbReference type="InterPro" id="IPR013780">
    <property type="entry name" value="Glyco_hydro_b"/>
</dbReference>
<dbReference type="InterPro" id="IPR017853">
    <property type="entry name" value="Glycoside_hydrolase_SF"/>
</dbReference>
<dbReference type="InterPro" id="IPR013783">
    <property type="entry name" value="Ig-like_fold"/>
</dbReference>
<dbReference type="InterPro" id="IPR014756">
    <property type="entry name" value="Ig_E-set"/>
</dbReference>
<dbReference type="NCBIfam" id="TIGR01515">
    <property type="entry name" value="branching_enzym"/>
    <property type="match status" value="1"/>
</dbReference>
<dbReference type="NCBIfam" id="NF003811">
    <property type="entry name" value="PRK05402.1"/>
    <property type="match status" value="1"/>
</dbReference>
<dbReference type="NCBIfam" id="NF008967">
    <property type="entry name" value="PRK12313.1"/>
    <property type="match status" value="1"/>
</dbReference>
<dbReference type="PANTHER" id="PTHR43651">
    <property type="entry name" value="1,4-ALPHA-GLUCAN-BRANCHING ENZYME"/>
    <property type="match status" value="1"/>
</dbReference>
<dbReference type="PANTHER" id="PTHR43651:SF3">
    <property type="entry name" value="1,4-ALPHA-GLUCAN-BRANCHING ENZYME"/>
    <property type="match status" value="1"/>
</dbReference>
<dbReference type="Pfam" id="PF00128">
    <property type="entry name" value="Alpha-amylase"/>
    <property type="match status" value="1"/>
</dbReference>
<dbReference type="Pfam" id="PF02806">
    <property type="entry name" value="Alpha-amylase_C"/>
    <property type="match status" value="1"/>
</dbReference>
<dbReference type="Pfam" id="PF02922">
    <property type="entry name" value="CBM_48"/>
    <property type="match status" value="1"/>
</dbReference>
<dbReference type="Pfam" id="PF22019">
    <property type="entry name" value="GlgB_N"/>
    <property type="match status" value="1"/>
</dbReference>
<dbReference type="PIRSF" id="PIRSF000463">
    <property type="entry name" value="GlgB"/>
    <property type="match status" value="1"/>
</dbReference>
<dbReference type="SMART" id="SM00642">
    <property type="entry name" value="Aamy"/>
    <property type="match status" value="1"/>
</dbReference>
<dbReference type="SUPFAM" id="SSF51445">
    <property type="entry name" value="(Trans)glycosidases"/>
    <property type="match status" value="1"/>
</dbReference>
<dbReference type="SUPFAM" id="SSF81296">
    <property type="entry name" value="E set domains"/>
    <property type="match status" value="2"/>
</dbReference>
<dbReference type="SUPFAM" id="SSF51011">
    <property type="entry name" value="Glycosyl hydrolase domain"/>
    <property type="match status" value="1"/>
</dbReference>
<comment type="function">
    <text evidence="1">Catalyzes the formation of the alpha-1,6-glucosidic linkages in glycogen by scission of a 1,4-alpha-linked oligosaccharide from growing alpha-1,4-glucan chains and the subsequent attachment of the oligosaccharide to the alpha-1,6 position.</text>
</comment>
<comment type="catalytic activity">
    <reaction evidence="1">
        <text>Transfers a segment of a (1-&gt;4)-alpha-D-glucan chain to a primary hydroxy group in a similar glucan chain.</text>
        <dbReference type="EC" id="2.4.1.18"/>
    </reaction>
</comment>
<comment type="pathway">
    <text evidence="1">Glycan biosynthesis; glycogen biosynthesis.</text>
</comment>
<comment type="subunit">
    <text evidence="1">Monomer.</text>
</comment>
<comment type="similarity">
    <text evidence="1">Belongs to the glycosyl hydrolase 13 family. GlgB subfamily.</text>
</comment>
<accession>Q2JK68</accession>
<sequence length="763" mass="88434">MGFLLSAEQVGQFVSNQWQDPYAVLGPQQIEEAGKSFGLVRALVPNARQVWLVERATGQAYPMQPLHPETLFELRFEPGTPLPDYFLRAQRVWDPQGEHLEEWEDPYRFPLEKVNHIGELDRYLFNEGNHHRIYDKLGAHLITVDGVKGVHFAVWAPNARNVSVIGDFNHWDGRQHQMKRLGESGIWAVFIPGIGPGAIYKYEVKTSWGDIYEKSDPYGFQQEVRPKTGSIVADLNTYTWHDQAWLEKRAATDPLRSPISVYEVHLGSWMHASAEDPPAEGQSVLVDQKPNTRFLTYRELADKLIPYVKELGFTHIELLPVAEHPFDGSWGYQVIGYYAVTSRYGSPQDFMYFVDRAHQAGIGVIVDWVPGHFPKDGHGLAFFDGTHLYEYADPRKGEHKGWGTLVFNYGRNEVRNYLVANALFWFEKYHIDGIRVDAVASMLYLDYDRKEWIPNPYGGREHLEAIDFFRQLNTLIFKYNPGALSIAEESTAWPMVTWPTHVGGLGFNLKWNMGWMHDMLDYFHMDPWFRQFHPHLVTFSLMYAFSENYMLAFSHDEVVHGKSHMLGKMPGDHWHKFASLRALYGYMFTHPGKKTLFMSMEFGQWNEWNVWADLDWELLQYEPHAKLRHYVASLNHLLRSEPALYTQDTKPEGFRWIDCSDHRGIVSFIRYGEDPSEWVVVVCNFTPVVWPNYRIGVPERGFYRELLNSDAVEFWGSGVGNLGGKWTDDWAYHNLPYSLELCLPQLSTLVLKWQPPQPVESQN</sequence>
<proteinExistence type="inferred from homology"/>
<evidence type="ECO:0000255" key="1">
    <source>
        <dbReference type="HAMAP-Rule" id="MF_00685"/>
    </source>
</evidence>
<protein>
    <recommendedName>
        <fullName evidence="1">1,4-alpha-glucan branching enzyme GlgB</fullName>
        <ecNumber evidence="1">2.4.1.18</ecNumber>
    </recommendedName>
    <alternativeName>
        <fullName evidence="1">1,4-alpha-D-glucan:1,4-alpha-D-glucan 6-glucosyl-transferase</fullName>
    </alternativeName>
    <alternativeName>
        <fullName evidence="1">Alpha-(1-&gt;4)-glucan branching enzyme</fullName>
    </alternativeName>
    <alternativeName>
        <fullName evidence="1">Glycogen branching enzyme</fullName>
        <shortName evidence="1">BE</shortName>
    </alternativeName>
</protein>
<organism>
    <name type="scientific">Synechococcus sp. (strain JA-2-3B'a(2-13))</name>
    <name type="common">Cyanobacteria bacterium Yellowstone B-Prime</name>
    <dbReference type="NCBI Taxonomy" id="321332"/>
    <lineage>
        <taxon>Bacteria</taxon>
        <taxon>Bacillati</taxon>
        <taxon>Cyanobacteriota</taxon>
        <taxon>Cyanophyceae</taxon>
        <taxon>Synechococcales</taxon>
        <taxon>Synechococcaceae</taxon>
        <taxon>Synechococcus</taxon>
    </lineage>
</organism>
<feature type="chain" id="PRO_0000260708" description="1,4-alpha-glucan branching enzyme GlgB">
    <location>
        <begin position="1"/>
        <end position="763"/>
    </location>
</feature>
<feature type="active site" description="Nucleophile" evidence="1">
    <location>
        <position position="437"/>
    </location>
</feature>
<feature type="active site" description="Proton donor" evidence="1">
    <location>
        <position position="488"/>
    </location>
</feature>
<reference key="1">
    <citation type="journal article" date="2007" name="ISME J.">
        <title>Population level functional diversity in a microbial community revealed by comparative genomic and metagenomic analyses.</title>
        <authorList>
            <person name="Bhaya D."/>
            <person name="Grossman A.R."/>
            <person name="Steunou A.-S."/>
            <person name="Khuri N."/>
            <person name="Cohan F.M."/>
            <person name="Hamamura N."/>
            <person name="Melendrez M.C."/>
            <person name="Bateson M.M."/>
            <person name="Ward D.M."/>
            <person name="Heidelberg J.F."/>
        </authorList>
    </citation>
    <scope>NUCLEOTIDE SEQUENCE [LARGE SCALE GENOMIC DNA]</scope>
    <source>
        <strain>JA-2-3B'a(2-13)</strain>
    </source>
</reference>
<gene>
    <name evidence="1" type="primary">glgB</name>
    <name type="ordered locus">CYB_1978</name>
</gene>
<name>GLGB_SYNJB</name>
<keyword id="KW-0119">Carbohydrate metabolism</keyword>
<keyword id="KW-0320">Glycogen biosynthesis</keyword>
<keyword id="KW-0321">Glycogen metabolism</keyword>
<keyword id="KW-0328">Glycosyltransferase</keyword>
<keyword id="KW-1185">Reference proteome</keyword>
<keyword id="KW-0808">Transferase</keyword>